<protein>
    <recommendedName>
        <fullName evidence="1">Large ribosomal subunit protein uL16</fullName>
    </recommendedName>
    <alternativeName>
        <fullName evidence="2">50S ribosomal protein L16</fullName>
    </alternativeName>
</protein>
<keyword id="KW-0687">Ribonucleoprotein</keyword>
<keyword id="KW-0689">Ribosomal protein</keyword>
<keyword id="KW-0694">RNA-binding</keyword>
<keyword id="KW-0699">rRNA-binding</keyword>
<keyword id="KW-0820">tRNA-binding</keyword>
<proteinExistence type="inferred from homology"/>
<gene>
    <name evidence="1" type="primary">rplP</name>
    <name type="ordered locus">Sbal195_0207</name>
</gene>
<comment type="function">
    <text evidence="1">Binds 23S rRNA and is also seen to make contacts with the A and possibly P site tRNAs.</text>
</comment>
<comment type="subunit">
    <text evidence="1">Part of the 50S ribosomal subunit.</text>
</comment>
<comment type="similarity">
    <text evidence="1">Belongs to the universal ribosomal protein uL16 family.</text>
</comment>
<feature type="chain" id="PRO_1000086776" description="Large ribosomal subunit protein uL16">
    <location>
        <begin position="1"/>
        <end position="136"/>
    </location>
</feature>
<name>RL16_SHEB9</name>
<accession>A9KWA9</accession>
<organism>
    <name type="scientific">Shewanella baltica (strain OS195)</name>
    <dbReference type="NCBI Taxonomy" id="399599"/>
    <lineage>
        <taxon>Bacteria</taxon>
        <taxon>Pseudomonadati</taxon>
        <taxon>Pseudomonadota</taxon>
        <taxon>Gammaproteobacteria</taxon>
        <taxon>Alteromonadales</taxon>
        <taxon>Shewanellaceae</taxon>
        <taxon>Shewanella</taxon>
    </lineage>
</organism>
<reference key="1">
    <citation type="submission" date="2007-11" db="EMBL/GenBank/DDBJ databases">
        <title>Complete sequence of chromosome of Shewanella baltica OS195.</title>
        <authorList>
            <consortium name="US DOE Joint Genome Institute"/>
            <person name="Copeland A."/>
            <person name="Lucas S."/>
            <person name="Lapidus A."/>
            <person name="Barry K."/>
            <person name="Glavina del Rio T."/>
            <person name="Dalin E."/>
            <person name="Tice H."/>
            <person name="Pitluck S."/>
            <person name="Chain P."/>
            <person name="Malfatti S."/>
            <person name="Shin M."/>
            <person name="Vergez L."/>
            <person name="Schmutz J."/>
            <person name="Larimer F."/>
            <person name="Land M."/>
            <person name="Hauser L."/>
            <person name="Kyrpides N."/>
            <person name="Kim E."/>
            <person name="Brettar I."/>
            <person name="Rodrigues J."/>
            <person name="Konstantinidis K."/>
            <person name="Klappenbach J."/>
            <person name="Hofle M."/>
            <person name="Tiedje J."/>
            <person name="Richardson P."/>
        </authorList>
    </citation>
    <scope>NUCLEOTIDE SEQUENCE [LARGE SCALE GENOMIC DNA]</scope>
    <source>
        <strain>OS195</strain>
    </source>
</reference>
<dbReference type="EMBL" id="CP000891">
    <property type="protein sequence ID" value="ABX47389.1"/>
    <property type="molecule type" value="Genomic_DNA"/>
</dbReference>
<dbReference type="RefSeq" id="WP_006083593.1">
    <property type="nucleotide sequence ID" value="NC_009997.1"/>
</dbReference>
<dbReference type="SMR" id="A9KWA9"/>
<dbReference type="GeneID" id="94726193"/>
<dbReference type="KEGG" id="sbn:Sbal195_0207"/>
<dbReference type="HOGENOM" id="CLU_078858_2_1_6"/>
<dbReference type="Proteomes" id="UP000000770">
    <property type="component" value="Chromosome"/>
</dbReference>
<dbReference type="GO" id="GO:0022625">
    <property type="term" value="C:cytosolic large ribosomal subunit"/>
    <property type="evidence" value="ECO:0007669"/>
    <property type="project" value="TreeGrafter"/>
</dbReference>
<dbReference type="GO" id="GO:0019843">
    <property type="term" value="F:rRNA binding"/>
    <property type="evidence" value="ECO:0007669"/>
    <property type="project" value="UniProtKB-UniRule"/>
</dbReference>
<dbReference type="GO" id="GO:0003735">
    <property type="term" value="F:structural constituent of ribosome"/>
    <property type="evidence" value="ECO:0007669"/>
    <property type="project" value="InterPro"/>
</dbReference>
<dbReference type="GO" id="GO:0000049">
    <property type="term" value="F:tRNA binding"/>
    <property type="evidence" value="ECO:0007669"/>
    <property type="project" value="UniProtKB-KW"/>
</dbReference>
<dbReference type="GO" id="GO:0006412">
    <property type="term" value="P:translation"/>
    <property type="evidence" value="ECO:0007669"/>
    <property type="project" value="UniProtKB-UniRule"/>
</dbReference>
<dbReference type="CDD" id="cd01433">
    <property type="entry name" value="Ribosomal_L16_L10e"/>
    <property type="match status" value="1"/>
</dbReference>
<dbReference type="FunFam" id="3.90.1170.10:FF:000001">
    <property type="entry name" value="50S ribosomal protein L16"/>
    <property type="match status" value="1"/>
</dbReference>
<dbReference type="Gene3D" id="3.90.1170.10">
    <property type="entry name" value="Ribosomal protein L10e/L16"/>
    <property type="match status" value="1"/>
</dbReference>
<dbReference type="HAMAP" id="MF_01342">
    <property type="entry name" value="Ribosomal_uL16"/>
    <property type="match status" value="1"/>
</dbReference>
<dbReference type="InterPro" id="IPR047873">
    <property type="entry name" value="Ribosomal_uL16"/>
</dbReference>
<dbReference type="InterPro" id="IPR000114">
    <property type="entry name" value="Ribosomal_uL16_bact-type"/>
</dbReference>
<dbReference type="InterPro" id="IPR020798">
    <property type="entry name" value="Ribosomal_uL16_CS"/>
</dbReference>
<dbReference type="InterPro" id="IPR016180">
    <property type="entry name" value="Ribosomal_uL16_dom"/>
</dbReference>
<dbReference type="InterPro" id="IPR036920">
    <property type="entry name" value="Ribosomal_uL16_sf"/>
</dbReference>
<dbReference type="NCBIfam" id="TIGR01164">
    <property type="entry name" value="rplP_bact"/>
    <property type="match status" value="1"/>
</dbReference>
<dbReference type="PANTHER" id="PTHR12220">
    <property type="entry name" value="50S/60S RIBOSOMAL PROTEIN L16"/>
    <property type="match status" value="1"/>
</dbReference>
<dbReference type="PANTHER" id="PTHR12220:SF13">
    <property type="entry name" value="LARGE RIBOSOMAL SUBUNIT PROTEIN UL16M"/>
    <property type="match status" value="1"/>
</dbReference>
<dbReference type="Pfam" id="PF00252">
    <property type="entry name" value="Ribosomal_L16"/>
    <property type="match status" value="1"/>
</dbReference>
<dbReference type="PRINTS" id="PR00060">
    <property type="entry name" value="RIBOSOMALL16"/>
</dbReference>
<dbReference type="SUPFAM" id="SSF54686">
    <property type="entry name" value="Ribosomal protein L16p/L10e"/>
    <property type="match status" value="1"/>
</dbReference>
<dbReference type="PROSITE" id="PS00586">
    <property type="entry name" value="RIBOSOMAL_L16_1"/>
    <property type="match status" value="1"/>
</dbReference>
<dbReference type="PROSITE" id="PS00701">
    <property type="entry name" value="RIBOSOMAL_L16_2"/>
    <property type="match status" value="1"/>
</dbReference>
<evidence type="ECO:0000255" key="1">
    <source>
        <dbReference type="HAMAP-Rule" id="MF_01342"/>
    </source>
</evidence>
<evidence type="ECO:0000305" key="2"/>
<sequence>MLQPKRMKFRKMFKGRNRGLANGTEVSFGTFGLKAVGRGRLTARQIESARRAMTRHIKRQGQIWIRVFPDKPITSKPLEVRMGKGKGNVEYWVCQIQPGKVLYEMNGVSEVIAREAFALAAAKLPIKTTFVTKTVM</sequence>